<organism>
    <name type="scientific">Agelena orientalis</name>
    <name type="common">Funnel-web spider</name>
    <dbReference type="NCBI Taxonomy" id="293813"/>
    <lineage>
        <taxon>Eukaryota</taxon>
        <taxon>Metazoa</taxon>
        <taxon>Ecdysozoa</taxon>
        <taxon>Arthropoda</taxon>
        <taxon>Chelicerata</taxon>
        <taxon>Arachnida</taxon>
        <taxon>Araneae</taxon>
        <taxon>Araneomorphae</taxon>
        <taxon>Entelegynae</taxon>
        <taxon>Agelenidae</taxon>
        <taxon>Agelena</taxon>
    </lineage>
</organism>
<protein>
    <recommendedName>
        <fullName>U2-agatoxin-Ao1q</fullName>
        <shortName>U2-AGTX-Ao1q</shortName>
    </recommendedName>
    <alternativeName>
        <fullName>Agel_16</fullName>
    </alternativeName>
</protein>
<reference key="1">
    <citation type="journal article" date="2005" name="Proteins">
        <title>A novel strategy for the identification of toxinlike structures in spider venom.</title>
        <authorList>
            <person name="Kozlov S.A."/>
            <person name="Malyavka A."/>
            <person name="McCutchen B."/>
            <person name="Lu A."/>
            <person name="Schepers E."/>
            <person name="Herrmann R."/>
            <person name="Grishin E.V."/>
        </authorList>
    </citation>
    <scope>NUCLEOTIDE SEQUENCE [MRNA]</scope>
    <source>
        <tissue>Venom gland</tissue>
    </source>
</reference>
<comment type="function">
    <text evidence="1">Insect active toxin causing rapid but reversible paralysis in crickets. No activity shown in mammals. Does not show effect on mammalian voltage-gated calcium channels (By similarity).</text>
</comment>
<comment type="subcellular location">
    <subcellularLocation>
        <location evidence="1">Secreted</location>
    </subcellularLocation>
</comment>
<comment type="tissue specificity">
    <text>Expressed by the venom gland.</text>
</comment>
<comment type="PTM">
    <text>Does not contain a cysteine at position 53 which disrupts the cysteine framework.</text>
</comment>
<comment type="similarity">
    <text evidence="3">Belongs to the neurotoxin 01 (U2-agtx) family.</text>
</comment>
<name>TAG2Q_AGEOR</name>
<sequence>MRSIISLLLISAMVFSMIAAVPEEEGLQLSEDERGGCLPHNRFCNALSGPRCFSGLRCKELSIWDSRCLG</sequence>
<keyword id="KW-0027">Amidation</keyword>
<keyword id="KW-1015">Disulfide bond</keyword>
<keyword id="KW-0528">Neurotoxin</keyword>
<keyword id="KW-0964">Secreted</keyword>
<keyword id="KW-0732">Signal</keyword>
<keyword id="KW-0800">Toxin</keyword>
<proteinExistence type="evidence at transcript level"/>
<evidence type="ECO:0000250" key="1"/>
<evidence type="ECO:0000255" key="2"/>
<evidence type="ECO:0000305" key="3"/>
<dbReference type="EMBL" id="AY681313">
    <property type="protein sequence ID" value="AAU93671.1"/>
    <property type="molecule type" value="mRNA"/>
</dbReference>
<dbReference type="SMR" id="Q5Y4W9"/>
<dbReference type="ArachnoServer" id="AS000097">
    <property type="toxin name" value="U2-agatoxin-Ao1q"/>
</dbReference>
<dbReference type="GO" id="GO:0005576">
    <property type="term" value="C:extracellular region"/>
    <property type="evidence" value="ECO:0007669"/>
    <property type="project" value="UniProtKB-SubCell"/>
</dbReference>
<dbReference type="GO" id="GO:0090729">
    <property type="term" value="F:toxin activity"/>
    <property type="evidence" value="ECO:0007669"/>
    <property type="project" value="UniProtKB-KW"/>
</dbReference>
<dbReference type="Pfam" id="PF05980">
    <property type="entry name" value="Toxin_7"/>
    <property type="match status" value="1"/>
</dbReference>
<accession>Q5Y4W9</accession>
<feature type="signal peptide" evidence="2">
    <location>
        <begin position="1"/>
        <end position="20"/>
    </location>
</feature>
<feature type="propeptide" id="PRO_5000093633" evidence="2">
    <location>
        <begin position="21"/>
        <end position="34"/>
    </location>
</feature>
<feature type="chain" id="PRO_5000093634" description="U2-agatoxin-Ao1q">
    <location>
        <begin position="35"/>
        <end position="69"/>
    </location>
</feature>
<feature type="modified residue" description="Leucine amide" evidence="1">
    <location>
        <position position="69"/>
    </location>
</feature>
<feature type="disulfide bond" evidence="1">
    <location>
        <begin position="44"/>
        <end position="58"/>
    </location>
</feature>
<feature type="disulfide bond" evidence="1">
    <location>
        <begin position="52"/>
        <end position="68"/>
    </location>
</feature>